<feature type="chain" id="PRO_1000005974" description="DNA-directed RNA polymerase subunit omega">
    <location>
        <begin position="1"/>
        <end position="70"/>
    </location>
</feature>
<sequence>MNSNDLAKRGESLIRHSTNRYLTTVRIAFRAKQRRFDDFDGLLEESTVKPVQRAIIELSDEQDQPDLLPG</sequence>
<evidence type="ECO:0000255" key="1">
    <source>
        <dbReference type="HAMAP-Rule" id="MF_00366"/>
    </source>
</evidence>
<gene>
    <name evidence="1" type="primary">rpoZ</name>
    <name type="ordered locus">NATL1_18311</name>
</gene>
<comment type="function">
    <text evidence="1">Promotes RNA polymerase assembly. Latches the N- and C-terminal regions of the beta' subunit thereby facilitating its interaction with the beta and alpha subunits.</text>
</comment>
<comment type="catalytic activity">
    <reaction evidence="1">
        <text>RNA(n) + a ribonucleoside 5'-triphosphate = RNA(n+1) + diphosphate</text>
        <dbReference type="Rhea" id="RHEA:21248"/>
        <dbReference type="Rhea" id="RHEA-COMP:14527"/>
        <dbReference type="Rhea" id="RHEA-COMP:17342"/>
        <dbReference type="ChEBI" id="CHEBI:33019"/>
        <dbReference type="ChEBI" id="CHEBI:61557"/>
        <dbReference type="ChEBI" id="CHEBI:140395"/>
        <dbReference type="EC" id="2.7.7.6"/>
    </reaction>
</comment>
<comment type="subunit">
    <text evidence="1">In cyanobacteria the RNAP catalytic core is composed of 2 alpha, 1 beta, 1 beta', 1 gamma and 1 omega subunit. When a sigma factor is associated with the core the holoenzyme is formed, which can initiate transcription.</text>
</comment>
<comment type="similarity">
    <text evidence="1">Belongs to the RNA polymerase subunit omega family.</text>
</comment>
<organism>
    <name type="scientific">Prochlorococcus marinus (strain NATL1A)</name>
    <dbReference type="NCBI Taxonomy" id="167555"/>
    <lineage>
        <taxon>Bacteria</taxon>
        <taxon>Bacillati</taxon>
        <taxon>Cyanobacteriota</taxon>
        <taxon>Cyanophyceae</taxon>
        <taxon>Synechococcales</taxon>
        <taxon>Prochlorococcaceae</taxon>
        <taxon>Prochlorococcus</taxon>
    </lineage>
</organism>
<dbReference type="EC" id="2.7.7.6" evidence="1"/>
<dbReference type="EMBL" id="CP000553">
    <property type="protein sequence ID" value="ABM76387.1"/>
    <property type="molecule type" value="Genomic_DNA"/>
</dbReference>
<dbReference type="RefSeq" id="WP_011295310.1">
    <property type="nucleotide sequence ID" value="NC_008819.1"/>
</dbReference>
<dbReference type="SMR" id="A2C4H7"/>
<dbReference type="KEGG" id="pme:NATL1_18311"/>
<dbReference type="eggNOG" id="ENOG5032RMS">
    <property type="taxonomic scope" value="Bacteria"/>
</dbReference>
<dbReference type="HOGENOM" id="CLU_175526_0_0_3"/>
<dbReference type="Proteomes" id="UP000002592">
    <property type="component" value="Chromosome"/>
</dbReference>
<dbReference type="GO" id="GO:0000428">
    <property type="term" value="C:DNA-directed RNA polymerase complex"/>
    <property type="evidence" value="ECO:0007669"/>
    <property type="project" value="UniProtKB-KW"/>
</dbReference>
<dbReference type="GO" id="GO:0003677">
    <property type="term" value="F:DNA binding"/>
    <property type="evidence" value="ECO:0007669"/>
    <property type="project" value="UniProtKB-UniRule"/>
</dbReference>
<dbReference type="GO" id="GO:0003899">
    <property type="term" value="F:DNA-directed RNA polymerase activity"/>
    <property type="evidence" value="ECO:0007669"/>
    <property type="project" value="UniProtKB-UniRule"/>
</dbReference>
<dbReference type="GO" id="GO:0006351">
    <property type="term" value="P:DNA-templated transcription"/>
    <property type="evidence" value="ECO:0007669"/>
    <property type="project" value="UniProtKB-UniRule"/>
</dbReference>
<dbReference type="HAMAP" id="MF_00366">
    <property type="entry name" value="RNApol_bact_RpoZ"/>
    <property type="match status" value="1"/>
</dbReference>
<dbReference type="InterPro" id="IPR003716">
    <property type="entry name" value="DNA-dir_RNA_pol_omega"/>
</dbReference>
<dbReference type="InterPro" id="IPR006110">
    <property type="entry name" value="Pol_omega/Rpo6/RPB6"/>
</dbReference>
<dbReference type="NCBIfam" id="NF001574">
    <property type="entry name" value="PRK00392.2-5"/>
    <property type="match status" value="1"/>
</dbReference>
<dbReference type="Pfam" id="PF01192">
    <property type="entry name" value="RNA_pol_Rpb6"/>
    <property type="match status" value="1"/>
</dbReference>
<proteinExistence type="inferred from homology"/>
<protein>
    <recommendedName>
        <fullName evidence="1">DNA-directed RNA polymerase subunit omega</fullName>
        <shortName evidence="1">RNAP omega subunit</shortName>
        <ecNumber evidence="1">2.7.7.6</ecNumber>
    </recommendedName>
    <alternativeName>
        <fullName evidence="1">RNA polymerase omega subunit</fullName>
    </alternativeName>
    <alternativeName>
        <fullName evidence="1">Transcriptase subunit omega</fullName>
    </alternativeName>
</protein>
<reference key="1">
    <citation type="journal article" date="2007" name="PLoS Genet.">
        <title>Patterns and implications of gene gain and loss in the evolution of Prochlorococcus.</title>
        <authorList>
            <person name="Kettler G.C."/>
            <person name="Martiny A.C."/>
            <person name="Huang K."/>
            <person name="Zucker J."/>
            <person name="Coleman M.L."/>
            <person name="Rodrigue S."/>
            <person name="Chen F."/>
            <person name="Lapidus A."/>
            <person name="Ferriera S."/>
            <person name="Johnson J."/>
            <person name="Steglich C."/>
            <person name="Church G.M."/>
            <person name="Richardson P."/>
            <person name="Chisholm S.W."/>
        </authorList>
    </citation>
    <scope>NUCLEOTIDE SEQUENCE [LARGE SCALE GENOMIC DNA]</scope>
    <source>
        <strain>NATL1A</strain>
    </source>
</reference>
<keyword id="KW-0240">DNA-directed RNA polymerase</keyword>
<keyword id="KW-0548">Nucleotidyltransferase</keyword>
<keyword id="KW-0804">Transcription</keyword>
<keyword id="KW-0808">Transferase</keyword>
<name>RPOZ_PROM1</name>
<accession>A2C4H7</accession>